<dbReference type="EMBL" id="L31775">
    <property type="protein sequence ID" value="AAC98413.1"/>
    <property type="molecule type" value="Genomic_DNA"/>
</dbReference>
<dbReference type="PIR" id="S60883">
    <property type="entry name" value="S60883"/>
</dbReference>
<dbReference type="RefSeq" id="WP_004175264.1">
    <property type="nucleotide sequence ID" value="NZ_WYAM01000047.1"/>
</dbReference>
<dbReference type="SMR" id="Q48476"/>
<dbReference type="TCDB" id="3.A.1.103.1">
    <property type="family name" value="the atp-binding cassette (abc) superfamily"/>
</dbReference>
<dbReference type="GO" id="GO:0005886">
    <property type="term" value="C:plasma membrane"/>
    <property type="evidence" value="ECO:0007669"/>
    <property type="project" value="UniProtKB-SubCell"/>
</dbReference>
<dbReference type="GO" id="GO:0140359">
    <property type="term" value="F:ABC-type transporter activity"/>
    <property type="evidence" value="ECO:0007669"/>
    <property type="project" value="InterPro"/>
</dbReference>
<dbReference type="GO" id="GO:0005524">
    <property type="term" value="F:ATP binding"/>
    <property type="evidence" value="ECO:0007669"/>
    <property type="project" value="UniProtKB-KW"/>
</dbReference>
<dbReference type="GO" id="GO:0016887">
    <property type="term" value="F:ATP hydrolysis activity"/>
    <property type="evidence" value="ECO:0007669"/>
    <property type="project" value="InterPro"/>
</dbReference>
<dbReference type="GO" id="GO:0015774">
    <property type="term" value="P:polysaccharide transport"/>
    <property type="evidence" value="ECO:0007669"/>
    <property type="project" value="UniProtKB-KW"/>
</dbReference>
<dbReference type="CDD" id="cd03220">
    <property type="entry name" value="ABC_KpsT_Wzt"/>
    <property type="match status" value="1"/>
</dbReference>
<dbReference type="Gene3D" id="3.40.50.300">
    <property type="entry name" value="P-loop containing nucleotide triphosphate hydrolases"/>
    <property type="match status" value="1"/>
</dbReference>
<dbReference type="InterPro" id="IPR003593">
    <property type="entry name" value="AAA+_ATPase"/>
</dbReference>
<dbReference type="InterPro" id="IPR003439">
    <property type="entry name" value="ABC_transporter-like_ATP-bd"/>
</dbReference>
<dbReference type="InterPro" id="IPR017871">
    <property type="entry name" value="ABC_transporter-like_CS"/>
</dbReference>
<dbReference type="InterPro" id="IPR015860">
    <property type="entry name" value="ABC_transpr_TagH-like"/>
</dbReference>
<dbReference type="InterPro" id="IPR050683">
    <property type="entry name" value="Bact_Polysacc_Export_ATP-bd"/>
</dbReference>
<dbReference type="InterPro" id="IPR027417">
    <property type="entry name" value="P-loop_NTPase"/>
</dbReference>
<dbReference type="PANTHER" id="PTHR46743">
    <property type="entry name" value="TEICHOIC ACIDS EXPORT ATP-BINDING PROTEIN TAGH"/>
    <property type="match status" value="1"/>
</dbReference>
<dbReference type="PANTHER" id="PTHR46743:SF2">
    <property type="entry name" value="TEICHOIC ACIDS EXPORT ATP-BINDING PROTEIN TAGH"/>
    <property type="match status" value="1"/>
</dbReference>
<dbReference type="Pfam" id="PF00005">
    <property type="entry name" value="ABC_tran"/>
    <property type="match status" value="1"/>
</dbReference>
<dbReference type="SMART" id="SM00382">
    <property type="entry name" value="AAA"/>
    <property type="match status" value="1"/>
</dbReference>
<dbReference type="SUPFAM" id="SSF52540">
    <property type="entry name" value="P-loop containing nucleoside triphosphate hydrolases"/>
    <property type="match status" value="1"/>
</dbReference>
<dbReference type="PROSITE" id="PS00211">
    <property type="entry name" value="ABC_TRANSPORTER_1"/>
    <property type="match status" value="1"/>
</dbReference>
<dbReference type="PROSITE" id="PS50893">
    <property type="entry name" value="ABC_TRANSPORTER_2"/>
    <property type="match status" value="1"/>
</dbReference>
<feature type="chain" id="PRO_0000092958" description="O-antigen export system ATP-binding protein RfbB">
    <location>
        <begin position="1"/>
        <end position="246"/>
    </location>
</feature>
<feature type="domain" description="ABC transporter" evidence="1">
    <location>
        <begin position="22"/>
        <end position="246"/>
    </location>
</feature>
<feature type="binding site" evidence="1">
    <location>
        <begin position="63"/>
        <end position="70"/>
    </location>
    <ligand>
        <name>ATP</name>
        <dbReference type="ChEBI" id="CHEBI:30616"/>
    </ligand>
</feature>
<gene>
    <name type="primary">rfbB</name>
</gene>
<accession>Q48476</accession>
<protein>
    <recommendedName>
        <fullName>O-antigen export system ATP-binding protein RfbB</fullName>
    </recommendedName>
</protein>
<sequence length="246" mass="27446">MHPVINFSHVTKEYPLYHHIGSGIKDLIFHPKRAFQLLKGRKYLAIEDVSFTVGKGEAVALIGRNGAGKSTSLGLVAGVIKPTKGTVTTEGRVASMLELGGGFHPELTGRENIYLNATLLGLRRKEVQQRMERIIEFSELGEFIDEPIRVYSSGMLAKLGFSVISQVEPDILIIDEVLAVGDIAFQAKCIQTIRDFKKRGVTILFVSHNMSDVEKICDRVIWIENHRLREVGSAERIIELYKQAMA</sequence>
<proteinExistence type="inferred from homology"/>
<keyword id="KW-0067">ATP-binding</keyword>
<keyword id="KW-0997">Cell inner membrane</keyword>
<keyword id="KW-1003">Cell membrane</keyword>
<keyword id="KW-0472">Membrane</keyword>
<keyword id="KW-0547">Nucleotide-binding</keyword>
<keyword id="KW-0625">Polysaccharide transport</keyword>
<keyword id="KW-0762">Sugar transport</keyword>
<keyword id="KW-0813">Transport</keyword>
<organism>
    <name type="scientific">Klebsiella pneumoniae</name>
    <dbReference type="NCBI Taxonomy" id="573"/>
    <lineage>
        <taxon>Bacteria</taxon>
        <taxon>Pseudomonadati</taxon>
        <taxon>Pseudomonadota</taxon>
        <taxon>Gammaproteobacteria</taxon>
        <taxon>Enterobacterales</taxon>
        <taxon>Enterobacteriaceae</taxon>
        <taxon>Klebsiella/Raoultella group</taxon>
        <taxon>Klebsiella</taxon>
        <taxon>Klebsiella pneumoniae complex</taxon>
    </lineage>
</organism>
<evidence type="ECO:0000255" key="1">
    <source>
        <dbReference type="PROSITE-ProRule" id="PRU00434"/>
    </source>
</evidence>
<evidence type="ECO:0000305" key="2"/>
<comment type="function">
    <text>May form an ATP-driven O-antigen export apparatus, in association with RfbA.</text>
</comment>
<comment type="subcellular location">
    <subcellularLocation>
        <location evidence="2">Cell inner membrane</location>
        <topology evidence="2">Peripheral membrane protein</topology>
    </subcellularLocation>
</comment>
<comment type="similarity">
    <text evidence="2">Belongs to the ABC transporter superfamily.</text>
</comment>
<reference key="1">
    <citation type="journal article" date="1994" name="Mol. Microbiol.">
        <title>Identification of an ATP-binding cassette transport system required for translocation of lipopolysaccharide O-antigen side-chains across the cytoplasmic membrane of Klebsiella pneumoniae serotype O1.</title>
        <authorList>
            <person name="Bronner D."/>
            <person name="Clarke B.R."/>
            <person name="Whitfield C."/>
        </authorList>
    </citation>
    <scope>NUCLEOTIDE SEQUENCE [GENOMIC DNA]</scope>
    <source>
        <strain>O1:K20 / 889/50</strain>
    </source>
</reference>
<name>RFBB1_KLEPN</name>